<name>MURA1_CLOPE</name>
<gene>
    <name evidence="1" type="primary">murA1</name>
    <name type="synonym">murA</name>
    <name type="ordered locus">CPE2184</name>
</gene>
<organism>
    <name type="scientific">Clostridium perfringens (strain 13 / Type A)</name>
    <dbReference type="NCBI Taxonomy" id="195102"/>
    <lineage>
        <taxon>Bacteria</taxon>
        <taxon>Bacillati</taxon>
        <taxon>Bacillota</taxon>
        <taxon>Clostridia</taxon>
        <taxon>Eubacteriales</taxon>
        <taxon>Clostridiaceae</taxon>
        <taxon>Clostridium</taxon>
    </lineage>
</organism>
<protein>
    <recommendedName>
        <fullName evidence="1">UDP-N-acetylglucosamine 1-carboxyvinyltransferase 1</fullName>
        <ecNumber evidence="1">2.5.1.7</ecNumber>
    </recommendedName>
    <alternativeName>
        <fullName evidence="1">Enoylpyruvate transferase 1</fullName>
    </alternativeName>
    <alternativeName>
        <fullName evidence="1">UDP-N-acetylglucosamine enolpyruvyl transferase 1</fullName>
        <shortName evidence="1">EPT 1</shortName>
    </alternativeName>
</protein>
<comment type="function">
    <text evidence="1">Cell wall formation. Adds enolpyruvyl to UDP-N-acetylglucosamine.</text>
</comment>
<comment type="catalytic activity">
    <reaction evidence="1">
        <text>phosphoenolpyruvate + UDP-N-acetyl-alpha-D-glucosamine = UDP-N-acetyl-3-O-(1-carboxyvinyl)-alpha-D-glucosamine + phosphate</text>
        <dbReference type="Rhea" id="RHEA:18681"/>
        <dbReference type="ChEBI" id="CHEBI:43474"/>
        <dbReference type="ChEBI" id="CHEBI:57705"/>
        <dbReference type="ChEBI" id="CHEBI:58702"/>
        <dbReference type="ChEBI" id="CHEBI:68483"/>
        <dbReference type="EC" id="2.5.1.7"/>
    </reaction>
</comment>
<comment type="pathway">
    <text evidence="1">Cell wall biogenesis; peptidoglycan biosynthesis.</text>
</comment>
<comment type="subcellular location">
    <subcellularLocation>
        <location evidence="1">Cytoplasm</location>
    </subcellularLocation>
</comment>
<comment type="similarity">
    <text evidence="1">Belongs to the EPSP synthase family. MurA subfamily.</text>
</comment>
<evidence type="ECO:0000255" key="1">
    <source>
        <dbReference type="HAMAP-Rule" id="MF_00111"/>
    </source>
</evidence>
<proteinExistence type="inferred from homology"/>
<accession>Q8XID7</accession>
<sequence length="421" mass="45719">MDKIVVKGGKKLKGEVNINTAKNSVLPIIAGSILATDGVLINELPMLQDVFTICNVMEQLGYDLKIDKKENKLIVPPLNKDPLIPSEDLVKKMRASFLIMGPMIAKYGEFKLARPGGCNIGSRPIELHLKGLRALGAEDSNCGNGFVCIKAKKLTGSKIYLDFPSVGATENIMMAATMAKGTTVIENAAQEPEITDLINFLNSMGAKIYIEKPGKIIIEGVDSLTSTEYTPIYDRIEAGTFMVAAAITGSEIKINGVNKDHCSAIISKLKEAGTEFFDIHNDENSIIVKGNEEIKPINIKTMPYPGYPTDMQSQMMSLLSIAKGSSIITESVFENRFMNVDELRRMGANIQVEGRTALIEGVDNLTGCEVKATDLRAGAALILAGLVAKGETIVTDIYHIDRGYVEIENKFRALGADISRI</sequence>
<reference key="1">
    <citation type="journal article" date="2002" name="Proc. Natl. Acad. Sci. U.S.A.">
        <title>Complete genome sequence of Clostridium perfringens, an anaerobic flesh-eater.</title>
        <authorList>
            <person name="Shimizu T."/>
            <person name="Ohtani K."/>
            <person name="Hirakawa H."/>
            <person name="Ohshima K."/>
            <person name="Yamashita A."/>
            <person name="Shiba T."/>
            <person name="Ogasawara N."/>
            <person name="Hattori M."/>
            <person name="Kuhara S."/>
            <person name="Hayashi H."/>
        </authorList>
    </citation>
    <scope>NUCLEOTIDE SEQUENCE [LARGE SCALE GENOMIC DNA]</scope>
    <source>
        <strain>13 / Type A</strain>
    </source>
</reference>
<keyword id="KW-0131">Cell cycle</keyword>
<keyword id="KW-0132">Cell division</keyword>
<keyword id="KW-0133">Cell shape</keyword>
<keyword id="KW-0961">Cell wall biogenesis/degradation</keyword>
<keyword id="KW-0963">Cytoplasm</keyword>
<keyword id="KW-0573">Peptidoglycan synthesis</keyword>
<keyword id="KW-0670">Pyruvate</keyword>
<keyword id="KW-1185">Reference proteome</keyword>
<keyword id="KW-0808">Transferase</keyword>
<dbReference type="EC" id="2.5.1.7" evidence="1"/>
<dbReference type="EMBL" id="BA000016">
    <property type="protein sequence ID" value="BAB81890.1"/>
    <property type="molecule type" value="Genomic_DNA"/>
</dbReference>
<dbReference type="RefSeq" id="WP_003470895.1">
    <property type="nucleotide sequence ID" value="NC_003366.1"/>
</dbReference>
<dbReference type="SMR" id="Q8XID7"/>
<dbReference type="STRING" id="195102.gene:10491463"/>
<dbReference type="KEGG" id="cpe:CPE2184"/>
<dbReference type="HOGENOM" id="CLU_027387_0_0_9"/>
<dbReference type="UniPathway" id="UPA00219"/>
<dbReference type="Proteomes" id="UP000000818">
    <property type="component" value="Chromosome"/>
</dbReference>
<dbReference type="GO" id="GO:0005737">
    <property type="term" value="C:cytoplasm"/>
    <property type="evidence" value="ECO:0007669"/>
    <property type="project" value="UniProtKB-SubCell"/>
</dbReference>
<dbReference type="GO" id="GO:0008760">
    <property type="term" value="F:UDP-N-acetylglucosamine 1-carboxyvinyltransferase activity"/>
    <property type="evidence" value="ECO:0007669"/>
    <property type="project" value="UniProtKB-UniRule"/>
</dbReference>
<dbReference type="GO" id="GO:0051301">
    <property type="term" value="P:cell division"/>
    <property type="evidence" value="ECO:0007669"/>
    <property type="project" value="UniProtKB-KW"/>
</dbReference>
<dbReference type="GO" id="GO:0071555">
    <property type="term" value="P:cell wall organization"/>
    <property type="evidence" value="ECO:0007669"/>
    <property type="project" value="UniProtKB-KW"/>
</dbReference>
<dbReference type="GO" id="GO:0009252">
    <property type="term" value="P:peptidoglycan biosynthetic process"/>
    <property type="evidence" value="ECO:0007669"/>
    <property type="project" value="UniProtKB-UniRule"/>
</dbReference>
<dbReference type="GO" id="GO:0008360">
    <property type="term" value="P:regulation of cell shape"/>
    <property type="evidence" value="ECO:0007669"/>
    <property type="project" value="UniProtKB-KW"/>
</dbReference>
<dbReference type="GO" id="GO:0019277">
    <property type="term" value="P:UDP-N-acetylgalactosamine biosynthetic process"/>
    <property type="evidence" value="ECO:0007669"/>
    <property type="project" value="InterPro"/>
</dbReference>
<dbReference type="CDD" id="cd01555">
    <property type="entry name" value="UdpNAET"/>
    <property type="match status" value="1"/>
</dbReference>
<dbReference type="Gene3D" id="3.65.10.10">
    <property type="entry name" value="Enolpyruvate transferase domain"/>
    <property type="match status" value="2"/>
</dbReference>
<dbReference type="HAMAP" id="MF_00111">
    <property type="entry name" value="MurA"/>
    <property type="match status" value="1"/>
</dbReference>
<dbReference type="InterPro" id="IPR001986">
    <property type="entry name" value="Enolpyruvate_Tfrase_dom"/>
</dbReference>
<dbReference type="InterPro" id="IPR036968">
    <property type="entry name" value="Enolpyruvate_Tfrase_sf"/>
</dbReference>
<dbReference type="InterPro" id="IPR050068">
    <property type="entry name" value="MurA_subfamily"/>
</dbReference>
<dbReference type="InterPro" id="IPR013792">
    <property type="entry name" value="RNA3'P_cycl/enolpyr_Trfase_a/b"/>
</dbReference>
<dbReference type="InterPro" id="IPR005750">
    <property type="entry name" value="UDP_GlcNAc_COvinyl_MurA"/>
</dbReference>
<dbReference type="NCBIfam" id="TIGR01072">
    <property type="entry name" value="murA"/>
    <property type="match status" value="1"/>
</dbReference>
<dbReference type="NCBIfam" id="NF006873">
    <property type="entry name" value="PRK09369.1"/>
    <property type="match status" value="1"/>
</dbReference>
<dbReference type="PANTHER" id="PTHR43783">
    <property type="entry name" value="UDP-N-ACETYLGLUCOSAMINE 1-CARBOXYVINYLTRANSFERASE"/>
    <property type="match status" value="1"/>
</dbReference>
<dbReference type="PANTHER" id="PTHR43783:SF1">
    <property type="entry name" value="UDP-N-ACETYLGLUCOSAMINE 1-CARBOXYVINYLTRANSFERASE"/>
    <property type="match status" value="1"/>
</dbReference>
<dbReference type="Pfam" id="PF00275">
    <property type="entry name" value="EPSP_synthase"/>
    <property type="match status" value="1"/>
</dbReference>
<dbReference type="SUPFAM" id="SSF55205">
    <property type="entry name" value="EPT/RTPC-like"/>
    <property type="match status" value="1"/>
</dbReference>
<feature type="chain" id="PRO_0000178865" description="UDP-N-acetylglucosamine 1-carboxyvinyltransferase 1">
    <location>
        <begin position="1"/>
        <end position="421"/>
    </location>
</feature>
<feature type="active site" description="Proton donor" evidence="1">
    <location>
        <position position="118"/>
    </location>
</feature>
<feature type="binding site" evidence="1">
    <location>
        <begin position="22"/>
        <end position="23"/>
    </location>
    <ligand>
        <name>phosphoenolpyruvate</name>
        <dbReference type="ChEBI" id="CHEBI:58702"/>
    </ligand>
</feature>
<feature type="binding site" evidence="1">
    <location>
        <position position="94"/>
    </location>
    <ligand>
        <name>UDP-N-acetyl-alpha-D-glucosamine</name>
        <dbReference type="ChEBI" id="CHEBI:57705"/>
    </ligand>
</feature>
<feature type="binding site" evidence="1">
    <location>
        <begin position="123"/>
        <end position="127"/>
    </location>
    <ligand>
        <name>UDP-N-acetyl-alpha-D-glucosamine</name>
        <dbReference type="ChEBI" id="CHEBI:57705"/>
    </ligand>
</feature>
<feature type="binding site" evidence="1">
    <location>
        <position position="310"/>
    </location>
    <ligand>
        <name>UDP-N-acetyl-alpha-D-glucosamine</name>
        <dbReference type="ChEBI" id="CHEBI:57705"/>
    </ligand>
</feature>
<feature type="binding site" evidence="1">
    <location>
        <position position="332"/>
    </location>
    <ligand>
        <name>UDP-N-acetyl-alpha-D-glucosamine</name>
        <dbReference type="ChEBI" id="CHEBI:57705"/>
    </ligand>
</feature>
<feature type="modified residue" description="2-(S-cysteinyl)pyruvic acid O-phosphothioketal" evidence="1">
    <location>
        <position position="118"/>
    </location>
</feature>